<sequence>MKLTFLGHAVLLISDIEGKYNVIIDPFITGNPAYPKDFQLPKIDYIMVTHGHGDHLGDTVELCKKYNSTVISNFEICNYLQLKGCKIHPMHVGGVYYFEFGKVKLTPAIHGSGIHEGDKVLYGGNPCGFLIKVEGKNIYHAGDTGLTKEFELLKDIDVAFLPIGGNFVMDVEDALVALEMIKPKIVVPIHYNTWDIIKADEQKFKEGAEKLGIKCVILKPGESLEI</sequence>
<organism>
    <name type="scientific">Fervidobacterium nodosum (strain ATCC 35602 / DSM 5306 / Rt17-B1)</name>
    <dbReference type="NCBI Taxonomy" id="381764"/>
    <lineage>
        <taxon>Bacteria</taxon>
        <taxon>Thermotogati</taxon>
        <taxon>Thermotogota</taxon>
        <taxon>Thermotogae</taxon>
        <taxon>Thermotogales</taxon>
        <taxon>Fervidobacteriaceae</taxon>
        <taxon>Fervidobacterium</taxon>
    </lineage>
</organism>
<name>Y635_FERNB</name>
<evidence type="ECO:0000255" key="1">
    <source>
        <dbReference type="HAMAP-Rule" id="MF_00457"/>
    </source>
</evidence>
<dbReference type="EMBL" id="CP000771">
    <property type="protein sequence ID" value="ABS60490.1"/>
    <property type="molecule type" value="Genomic_DNA"/>
</dbReference>
<dbReference type="RefSeq" id="WP_011993809.1">
    <property type="nucleotide sequence ID" value="NC_009718.1"/>
</dbReference>
<dbReference type="SMR" id="A7HKQ7"/>
<dbReference type="STRING" id="381764.Fnod_0635"/>
<dbReference type="KEGG" id="fno:Fnod_0635"/>
<dbReference type="eggNOG" id="COG2220">
    <property type="taxonomic scope" value="Bacteria"/>
</dbReference>
<dbReference type="HOGENOM" id="CLU_070010_4_1_0"/>
<dbReference type="OrthoDB" id="36975at2"/>
<dbReference type="Proteomes" id="UP000002415">
    <property type="component" value="Chromosome"/>
</dbReference>
<dbReference type="GO" id="GO:0016787">
    <property type="term" value="F:hydrolase activity"/>
    <property type="evidence" value="ECO:0007669"/>
    <property type="project" value="UniProtKB-UniRule"/>
</dbReference>
<dbReference type="Gene3D" id="3.60.15.10">
    <property type="entry name" value="Ribonuclease Z/Hydroxyacylglutathione hydrolase-like"/>
    <property type="match status" value="1"/>
</dbReference>
<dbReference type="HAMAP" id="MF_00457">
    <property type="entry name" value="UPF0173"/>
    <property type="match status" value="1"/>
</dbReference>
<dbReference type="InterPro" id="IPR001279">
    <property type="entry name" value="Metallo-B-lactamas"/>
</dbReference>
<dbReference type="InterPro" id="IPR036866">
    <property type="entry name" value="RibonucZ/Hydroxyglut_hydro"/>
</dbReference>
<dbReference type="InterPro" id="IPR022877">
    <property type="entry name" value="UPF0173"/>
</dbReference>
<dbReference type="InterPro" id="IPR050114">
    <property type="entry name" value="UPF0173_UPF0282_UlaG_hydrolase"/>
</dbReference>
<dbReference type="NCBIfam" id="NF001911">
    <property type="entry name" value="PRK00685.1"/>
    <property type="match status" value="1"/>
</dbReference>
<dbReference type="PANTHER" id="PTHR43546:SF3">
    <property type="entry name" value="UPF0173 METAL-DEPENDENT HYDROLASE MJ1163"/>
    <property type="match status" value="1"/>
</dbReference>
<dbReference type="PANTHER" id="PTHR43546">
    <property type="entry name" value="UPF0173 METAL-DEPENDENT HYDROLASE MJ1163-RELATED"/>
    <property type="match status" value="1"/>
</dbReference>
<dbReference type="Pfam" id="PF12706">
    <property type="entry name" value="Lactamase_B_2"/>
    <property type="match status" value="1"/>
</dbReference>
<dbReference type="SMART" id="SM00849">
    <property type="entry name" value="Lactamase_B"/>
    <property type="match status" value="1"/>
</dbReference>
<dbReference type="SUPFAM" id="SSF56281">
    <property type="entry name" value="Metallo-hydrolase/oxidoreductase"/>
    <property type="match status" value="1"/>
</dbReference>
<feature type="chain" id="PRO_1000072382" description="UPF0173 metal-dependent hydrolase Fnod_0635">
    <location>
        <begin position="1"/>
        <end position="226"/>
    </location>
</feature>
<proteinExistence type="inferred from homology"/>
<protein>
    <recommendedName>
        <fullName evidence="1">UPF0173 metal-dependent hydrolase Fnod_0635</fullName>
    </recommendedName>
</protein>
<keyword id="KW-0378">Hydrolase</keyword>
<keyword id="KW-1185">Reference proteome</keyword>
<accession>A7HKQ7</accession>
<comment type="similarity">
    <text evidence="1">Belongs to the UPF0173 family.</text>
</comment>
<reference key="1">
    <citation type="submission" date="2007-07" db="EMBL/GenBank/DDBJ databases">
        <title>Complete sequence of Fervidobacterium nodosum Rt17-B1.</title>
        <authorList>
            <consortium name="US DOE Joint Genome Institute"/>
            <person name="Copeland A."/>
            <person name="Lucas S."/>
            <person name="Lapidus A."/>
            <person name="Barry K."/>
            <person name="Glavina del Rio T."/>
            <person name="Dalin E."/>
            <person name="Tice H."/>
            <person name="Pitluck S."/>
            <person name="Saunders E."/>
            <person name="Brettin T."/>
            <person name="Bruce D."/>
            <person name="Detter J.C."/>
            <person name="Han C."/>
            <person name="Schmutz J."/>
            <person name="Larimer F."/>
            <person name="Land M."/>
            <person name="Hauser L."/>
            <person name="Kyrpides N."/>
            <person name="Mikhailova N."/>
            <person name="Nelson K."/>
            <person name="Gogarten J.P."/>
            <person name="Noll K."/>
            <person name="Richardson P."/>
        </authorList>
    </citation>
    <scope>NUCLEOTIDE SEQUENCE [LARGE SCALE GENOMIC DNA]</scope>
    <source>
        <strain>ATCC 35602 / DSM 5306 / Rt17-B1</strain>
    </source>
</reference>
<gene>
    <name type="ordered locus">Fnod_0635</name>
</gene>